<sequence length="285" mass="32573">MSRNLSIRAKVFLKPLVLFQIIDAYDRRPKGDNQVMGTLLGRTKEDHIEITNCFTVPHKEHSENKRIDLDMAYASEVLELNMFAYPNERVLGWFCTGKSVSRSASLIHDYYVRECGERQPLHLLVDASLKNQRLSTRLYCAVEMGVPGGTKGLMFSLVPLEISSENSDLVAVRCIEKQSQQQASKQMERFVPELVQVVDATRNIQQRLDLLLRYINDVLARKKKPDNLVGRSLQAALTAVPLFDSEKFRLMFNTNVRDMLMAITLSTMIKTQLEISEKLSCMQDQ</sequence>
<keyword id="KW-0963">Cytoplasm</keyword>
<keyword id="KW-0396">Initiation factor</keyword>
<keyword id="KW-0648">Protein biosynthesis</keyword>
<keyword id="KW-1185">Reference proteome</keyword>
<dbReference type="EMBL" id="CH480841">
    <property type="protein sequence ID" value="EDW49572.1"/>
    <property type="molecule type" value="Genomic_DNA"/>
</dbReference>
<dbReference type="SMR" id="B4II46"/>
<dbReference type="STRING" id="7238.B4II46"/>
<dbReference type="EnsemblMetazoa" id="FBtr0199523">
    <property type="protein sequence ID" value="FBpp0198015"/>
    <property type="gene ID" value="FBgn0171453"/>
</dbReference>
<dbReference type="EnsemblMetazoa" id="XM_002043370.2">
    <property type="protein sequence ID" value="XP_002043406.1"/>
    <property type="gene ID" value="LOC6619182"/>
</dbReference>
<dbReference type="GeneID" id="6619182"/>
<dbReference type="KEGG" id="dse:6619182"/>
<dbReference type="CTD" id="35547"/>
<dbReference type="HOGENOM" id="CLU_027018_0_2_1"/>
<dbReference type="OMA" id="IEITNCF"/>
<dbReference type="OrthoDB" id="39041at7215"/>
<dbReference type="PhylomeDB" id="B4II46"/>
<dbReference type="Proteomes" id="UP000001292">
    <property type="component" value="Unassembled WGS sequence"/>
</dbReference>
<dbReference type="GO" id="GO:0016282">
    <property type="term" value="C:eukaryotic 43S preinitiation complex"/>
    <property type="evidence" value="ECO:0007669"/>
    <property type="project" value="UniProtKB-UniRule"/>
</dbReference>
<dbReference type="GO" id="GO:0033290">
    <property type="term" value="C:eukaryotic 48S preinitiation complex"/>
    <property type="evidence" value="ECO:0007669"/>
    <property type="project" value="UniProtKB-UniRule"/>
</dbReference>
<dbReference type="GO" id="GO:0071541">
    <property type="term" value="C:eukaryotic translation initiation factor 3 complex, eIF3m"/>
    <property type="evidence" value="ECO:0007669"/>
    <property type="project" value="TreeGrafter"/>
</dbReference>
<dbReference type="GO" id="GO:0008237">
    <property type="term" value="F:metallopeptidase activity"/>
    <property type="evidence" value="ECO:0007669"/>
    <property type="project" value="InterPro"/>
</dbReference>
<dbReference type="GO" id="GO:0003743">
    <property type="term" value="F:translation initiation factor activity"/>
    <property type="evidence" value="ECO:0007669"/>
    <property type="project" value="UniProtKB-UniRule"/>
</dbReference>
<dbReference type="GO" id="GO:0031369">
    <property type="term" value="F:translation initiation factor binding"/>
    <property type="evidence" value="ECO:0007669"/>
    <property type="project" value="InterPro"/>
</dbReference>
<dbReference type="GO" id="GO:0001732">
    <property type="term" value="P:formation of cytoplasmic translation initiation complex"/>
    <property type="evidence" value="ECO:0007669"/>
    <property type="project" value="UniProtKB-UniRule"/>
</dbReference>
<dbReference type="CDD" id="cd08064">
    <property type="entry name" value="MPN_eIF3f"/>
    <property type="match status" value="1"/>
</dbReference>
<dbReference type="Gene3D" id="3.40.140.10">
    <property type="entry name" value="Cytidine Deaminase, domain 2"/>
    <property type="match status" value="1"/>
</dbReference>
<dbReference type="HAMAP" id="MF_03005">
    <property type="entry name" value="eIF3f"/>
    <property type="match status" value="1"/>
</dbReference>
<dbReference type="InterPro" id="IPR027531">
    <property type="entry name" value="eIF3f"/>
</dbReference>
<dbReference type="InterPro" id="IPR024969">
    <property type="entry name" value="EIF3F/CSN6-like_C"/>
</dbReference>
<dbReference type="InterPro" id="IPR000555">
    <property type="entry name" value="JAMM/MPN+_dom"/>
</dbReference>
<dbReference type="InterPro" id="IPR037518">
    <property type="entry name" value="MPN"/>
</dbReference>
<dbReference type="PANTHER" id="PTHR10540:SF6">
    <property type="entry name" value="EUKARYOTIC TRANSLATION INITIATION FACTOR 3 SUBUNIT F"/>
    <property type="match status" value="1"/>
</dbReference>
<dbReference type="PANTHER" id="PTHR10540">
    <property type="entry name" value="EUKARYOTIC TRANSLATION INITIATION FACTOR 3 SUBUNIT F-RELATED"/>
    <property type="match status" value="1"/>
</dbReference>
<dbReference type="Pfam" id="PF01398">
    <property type="entry name" value="JAB"/>
    <property type="match status" value="1"/>
</dbReference>
<dbReference type="Pfam" id="PF13012">
    <property type="entry name" value="MitMem_reg"/>
    <property type="match status" value="1"/>
</dbReference>
<dbReference type="SMART" id="SM00232">
    <property type="entry name" value="JAB_MPN"/>
    <property type="match status" value="1"/>
</dbReference>
<dbReference type="PROSITE" id="PS50249">
    <property type="entry name" value="MPN"/>
    <property type="match status" value="1"/>
</dbReference>
<organism>
    <name type="scientific">Drosophila sechellia</name>
    <name type="common">Fruit fly</name>
    <dbReference type="NCBI Taxonomy" id="7238"/>
    <lineage>
        <taxon>Eukaryota</taxon>
        <taxon>Metazoa</taxon>
        <taxon>Ecdysozoa</taxon>
        <taxon>Arthropoda</taxon>
        <taxon>Hexapoda</taxon>
        <taxon>Insecta</taxon>
        <taxon>Pterygota</taxon>
        <taxon>Neoptera</taxon>
        <taxon>Endopterygota</taxon>
        <taxon>Diptera</taxon>
        <taxon>Brachycera</taxon>
        <taxon>Muscomorpha</taxon>
        <taxon>Ephydroidea</taxon>
        <taxon>Drosophilidae</taxon>
        <taxon>Drosophila</taxon>
        <taxon>Sophophora</taxon>
    </lineage>
</organism>
<feature type="chain" id="PRO_0000364312" description="Eukaryotic translation initiation factor 3 subunit F-2">
    <location>
        <begin position="1"/>
        <end position="285"/>
    </location>
</feature>
<feature type="domain" description="MPN" evidence="2">
    <location>
        <begin position="11"/>
        <end position="145"/>
    </location>
</feature>
<gene>
    <name evidence="1" type="primary">eIF3f2</name>
    <name evidence="1" type="synonym">eIF3-S5-2</name>
    <name type="ORF">GM16538</name>
</gene>
<name>EI3F2_DROSE</name>
<evidence type="ECO:0000255" key="1">
    <source>
        <dbReference type="HAMAP-Rule" id="MF_03005"/>
    </source>
</evidence>
<evidence type="ECO:0000255" key="2">
    <source>
        <dbReference type="PROSITE-ProRule" id="PRU01182"/>
    </source>
</evidence>
<accession>B4II46</accession>
<proteinExistence type="inferred from homology"/>
<reference key="1">
    <citation type="journal article" date="2007" name="Nature">
        <title>Evolution of genes and genomes on the Drosophila phylogeny.</title>
        <authorList>
            <consortium name="Drosophila 12 genomes consortium"/>
        </authorList>
    </citation>
    <scope>NUCLEOTIDE SEQUENCE [LARGE SCALE GENOMIC DNA]</scope>
    <source>
        <strain>Rob3c / Tucson 14021-0248.25</strain>
    </source>
</reference>
<comment type="function">
    <text evidence="1">Component of the eukaryotic translation initiation factor 3 (eIF-3) complex, which is involved in protein synthesis of a specialized repertoire of mRNAs and, together with other initiation factors, stimulates binding of mRNA and methionyl-tRNAi to the 40S ribosome. The eIF-3 complex specifically targets and initiates translation of a subset of mRNAs involved in cell proliferation.</text>
</comment>
<comment type="subunit">
    <text evidence="1">Component of the eukaryotic translation initiation factor 3 (eIF-3) complex. The eIF-3 complex interacts with pix.</text>
</comment>
<comment type="subcellular location">
    <subcellularLocation>
        <location evidence="1">Cytoplasm</location>
    </subcellularLocation>
</comment>
<comment type="similarity">
    <text evidence="1">Belongs to the eIF-3 subunit F family.</text>
</comment>
<protein>
    <recommendedName>
        <fullName evidence="1">Eukaryotic translation initiation factor 3 subunit F-2</fullName>
        <shortName evidence="1">eIF3f-2</shortName>
    </recommendedName>
    <alternativeName>
        <fullName evidence="1">Eukaryotic translation initiation factor 3 subunit 5-2</fullName>
    </alternativeName>
</protein>